<organism>
    <name type="scientific">Methanococcus vannielii (strain ATCC 35089 / DSM 1224 / JCM 13029 / OCM 148 / SB)</name>
    <dbReference type="NCBI Taxonomy" id="406327"/>
    <lineage>
        <taxon>Archaea</taxon>
        <taxon>Methanobacteriati</taxon>
        <taxon>Methanobacteriota</taxon>
        <taxon>Methanomada group</taxon>
        <taxon>Methanococci</taxon>
        <taxon>Methanococcales</taxon>
        <taxon>Methanococcaceae</taxon>
        <taxon>Methanococcus</taxon>
    </lineage>
</organism>
<protein>
    <recommendedName>
        <fullName evidence="1">DNA-directed RNA polymerase subunit Rpo10</fullName>
        <ecNumber evidence="1">2.7.7.6</ecNumber>
    </recommendedName>
    <alternativeName>
        <fullName evidence="1">DNA-directed RNA polymerase subunit N</fullName>
    </alternativeName>
</protein>
<reference key="1">
    <citation type="submission" date="2007-06" db="EMBL/GenBank/DDBJ databases">
        <title>Complete sequence of Methanococcus vannielii SB.</title>
        <authorList>
            <consortium name="US DOE Joint Genome Institute"/>
            <person name="Copeland A."/>
            <person name="Lucas S."/>
            <person name="Lapidus A."/>
            <person name="Barry K."/>
            <person name="Glavina del Rio T."/>
            <person name="Dalin E."/>
            <person name="Tice H."/>
            <person name="Pitluck S."/>
            <person name="Chain P."/>
            <person name="Malfatti S."/>
            <person name="Shin M."/>
            <person name="Vergez L."/>
            <person name="Schmutz J."/>
            <person name="Larimer F."/>
            <person name="Land M."/>
            <person name="Hauser L."/>
            <person name="Kyrpides N."/>
            <person name="Anderson I."/>
            <person name="Sieprawska-Lupa M."/>
            <person name="Whitman W.B."/>
            <person name="Richardson P."/>
        </authorList>
    </citation>
    <scope>NUCLEOTIDE SEQUENCE [LARGE SCALE GENOMIC DNA]</scope>
    <source>
        <strain>ATCC 35089 / DSM 1224 / JCM 13029 / OCM 148 / SB</strain>
    </source>
</reference>
<proteinExistence type="inferred from homology"/>
<evidence type="ECO:0000255" key="1">
    <source>
        <dbReference type="HAMAP-Rule" id="MF_00250"/>
    </source>
</evidence>
<sequence length="68" mass="8044">MIFPIRCFSCGNVISEVYDEYKTRLSNVESPEEILNDLGVTKYCCRRMFASHRLENGKELFDDIVEYR</sequence>
<keyword id="KW-0963">Cytoplasm</keyword>
<keyword id="KW-0240">DNA-directed RNA polymerase</keyword>
<keyword id="KW-0479">Metal-binding</keyword>
<keyword id="KW-0548">Nucleotidyltransferase</keyword>
<keyword id="KW-0804">Transcription</keyword>
<keyword id="KW-0808">Transferase</keyword>
<keyword id="KW-0862">Zinc</keyword>
<comment type="function">
    <text evidence="1">DNA-dependent RNA polymerase (RNAP) catalyzes the transcription of DNA into RNA using the four ribonucleoside triphosphates as substrates.</text>
</comment>
<comment type="catalytic activity">
    <reaction evidence="1">
        <text>RNA(n) + a ribonucleoside 5'-triphosphate = RNA(n+1) + diphosphate</text>
        <dbReference type="Rhea" id="RHEA:21248"/>
        <dbReference type="Rhea" id="RHEA-COMP:14527"/>
        <dbReference type="Rhea" id="RHEA-COMP:17342"/>
        <dbReference type="ChEBI" id="CHEBI:33019"/>
        <dbReference type="ChEBI" id="CHEBI:61557"/>
        <dbReference type="ChEBI" id="CHEBI:140395"/>
        <dbReference type="EC" id="2.7.7.6"/>
    </reaction>
</comment>
<comment type="cofactor">
    <cofactor evidence="1">
        <name>Zn(2+)</name>
        <dbReference type="ChEBI" id="CHEBI:29105"/>
    </cofactor>
    <text evidence="1">Binds 1 zinc ion.</text>
</comment>
<comment type="subunit">
    <text evidence="1">Part of the RNA polymerase complex.</text>
</comment>
<comment type="subcellular location">
    <subcellularLocation>
        <location evidence="1">Cytoplasm</location>
    </subcellularLocation>
</comment>
<comment type="similarity">
    <text evidence="1">Belongs to the archaeal Rpo10/eukaryotic RPB10 RNA polymerase subunit family.</text>
</comment>
<gene>
    <name evidence="1" type="primary">rpo10</name>
    <name evidence="1" type="synonym">rpoN</name>
    <name type="ordered locus">Mevan_0637</name>
</gene>
<accession>A6UPX1</accession>
<feature type="chain" id="PRO_1000005779" description="DNA-directed RNA polymerase subunit Rpo10">
    <location>
        <begin position="1"/>
        <end position="68"/>
    </location>
</feature>
<feature type="binding site" evidence="1">
    <location>
        <position position="7"/>
    </location>
    <ligand>
        <name>Zn(2+)</name>
        <dbReference type="ChEBI" id="CHEBI:29105"/>
    </ligand>
</feature>
<feature type="binding site" evidence="1">
    <location>
        <position position="10"/>
    </location>
    <ligand>
        <name>Zn(2+)</name>
        <dbReference type="ChEBI" id="CHEBI:29105"/>
    </ligand>
</feature>
<feature type="binding site" evidence="1">
    <location>
        <position position="44"/>
    </location>
    <ligand>
        <name>Zn(2+)</name>
        <dbReference type="ChEBI" id="CHEBI:29105"/>
    </ligand>
</feature>
<feature type="binding site" evidence="1">
    <location>
        <position position="45"/>
    </location>
    <ligand>
        <name>Zn(2+)</name>
        <dbReference type="ChEBI" id="CHEBI:29105"/>
    </ligand>
</feature>
<name>RPO10_METVS</name>
<dbReference type="EC" id="2.7.7.6" evidence="1"/>
<dbReference type="EMBL" id="CP000742">
    <property type="protein sequence ID" value="ABR54543.1"/>
    <property type="molecule type" value="Genomic_DNA"/>
</dbReference>
<dbReference type="RefSeq" id="WP_011972446.1">
    <property type="nucleotide sequence ID" value="NC_009634.1"/>
</dbReference>
<dbReference type="SMR" id="A6UPX1"/>
<dbReference type="STRING" id="406327.Mevan_0637"/>
<dbReference type="GeneID" id="5325263"/>
<dbReference type="KEGG" id="mvn:Mevan_0637"/>
<dbReference type="eggNOG" id="arCOG04244">
    <property type="taxonomic scope" value="Archaea"/>
</dbReference>
<dbReference type="HOGENOM" id="CLU_143122_2_1_2"/>
<dbReference type="OrthoDB" id="371754at2157"/>
<dbReference type="Proteomes" id="UP000001107">
    <property type="component" value="Chromosome"/>
</dbReference>
<dbReference type="GO" id="GO:0005737">
    <property type="term" value="C:cytoplasm"/>
    <property type="evidence" value="ECO:0007669"/>
    <property type="project" value="UniProtKB-SubCell"/>
</dbReference>
<dbReference type="GO" id="GO:0000428">
    <property type="term" value="C:DNA-directed RNA polymerase complex"/>
    <property type="evidence" value="ECO:0007669"/>
    <property type="project" value="UniProtKB-KW"/>
</dbReference>
<dbReference type="GO" id="GO:0003677">
    <property type="term" value="F:DNA binding"/>
    <property type="evidence" value="ECO:0007669"/>
    <property type="project" value="InterPro"/>
</dbReference>
<dbReference type="GO" id="GO:0003899">
    <property type="term" value="F:DNA-directed RNA polymerase activity"/>
    <property type="evidence" value="ECO:0007669"/>
    <property type="project" value="UniProtKB-UniRule"/>
</dbReference>
<dbReference type="GO" id="GO:0008270">
    <property type="term" value="F:zinc ion binding"/>
    <property type="evidence" value="ECO:0007669"/>
    <property type="project" value="UniProtKB-UniRule"/>
</dbReference>
<dbReference type="GO" id="GO:0006351">
    <property type="term" value="P:DNA-templated transcription"/>
    <property type="evidence" value="ECO:0007669"/>
    <property type="project" value="UniProtKB-UniRule"/>
</dbReference>
<dbReference type="Gene3D" id="1.10.10.60">
    <property type="entry name" value="Homeodomain-like"/>
    <property type="match status" value="1"/>
</dbReference>
<dbReference type="HAMAP" id="MF_00250">
    <property type="entry name" value="RNApol_arch_Rpo10"/>
    <property type="match status" value="1"/>
</dbReference>
<dbReference type="InterPro" id="IPR023580">
    <property type="entry name" value="RNA_pol_su_RPB10"/>
</dbReference>
<dbReference type="InterPro" id="IPR020789">
    <property type="entry name" value="RNA_pol_suN_Zn-BS"/>
</dbReference>
<dbReference type="InterPro" id="IPR000268">
    <property type="entry name" value="RPABC5/Rpb10"/>
</dbReference>
<dbReference type="NCBIfam" id="NF003089">
    <property type="entry name" value="PRK04016.1"/>
    <property type="match status" value="1"/>
</dbReference>
<dbReference type="PANTHER" id="PTHR23431:SF3">
    <property type="entry name" value="DNA-DIRECTED RNA POLYMERASES I, II, AND III SUBUNIT RPABC5"/>
    <property type="match status" value="1"/>
</dbReference>
<dbReference type="PANTHER" id="PTHR23431">
    <property type="entry name" value="DNA-DIRECTED RNA POLYMERASES I, II, AND III SUBUNIT RPABC5 FAMILY MEMBER"/>
    <property type="match status" value="1"/>
</dbReference>
<dbReference type="Pfam" id="PF01194">
    <property type="entry name" value="RNA_pol_N"/>
    <property type="match status" value="1"/>
</dbReference>
<dbReference type="PIRSF" id="PIRSF005653">
    <property type="entry name" value="RNA_pol_N/8_sub"/>
    <property type="match status" value="1"/>
</dbReference>
<dbReference type="SUPFAM" id="SSF46924">
    <property type="entry name" value="RNA polymerase subunit RPB10"/>
    <property type="match status" value="1"/>
</dbReference>
<dbReference type="PROSITE" id="PS01112">
    <property type="entry name" value="RNA_POL_N_8KD"/>
    <property type="match status" value="1"/>
</dbReference>